<gene>
    <name evidence="1" type="primary">gltX</name>
    <name type="ordered locus">TV1110</name>
    <name type="ORF">TVG1143889</name>
</gene>
<name>SYE_THEVO</name>
<proteinExistence type="inferred from homology"/>
<comment type="function">
    <text evidence="1">Catalyzes the attachment of glutamate to tRNA(Glu) in a two-step reaction: glutamate is first activated by ATP to form Glu-AMP and then transferred to the acceptor end of tRNA(Glu).</text>
</comment>
<comment type="catalytic activity">
    <reaction evidence="1">
        <text>tRNA(Glu) + L-glutamate + ATP = L-glutamyl-tRNA(Glu) + AMP + diphosphate</text>
        <dbReference type="Rhea" id="RHEA:23540"/>
        <dbReference type="Rhea" id="RHEA-COMP:9663"/>
        <dbReference type="Rhea" id="RHEA-COMP:9680"/>
        <dbReference type="ChEBI" id="CHEBI:29985"/>
        <dbReference type="ChEBI" id="CHEBI:30616"/>
        <dbReference type="ChEBI" id="CHEBI:33019"/>
        <dbReference type="ChEBI" id="CHEBI:78442"/>
        <dbReference type="ChEBI" id="CHEBI:78520"/>
        <dbReference type="ChEBI" id="CHEBI:456215"/>
        <dbReference type="EC" id="6.1.1.17"/>
    </reaction>
</comment>
<comment type="subcellular location">
    <subcellularLocation>
        <location evidence="1">Cytoplasm</location>
    </subcellularLocation>
</comment>
<comment type="similarity">
    <text evidence="1">Belongs to the class-I aminoacyl-tRNA synthetase family. Glutamate--tRNA ligase type 2 subfamily.</text>
</comment>
<feature type="chain" id="PRO_0000119734" description="Glutamate--tRNA ligase">
    <location>
        <begin position="1"/>
        <end position="548"/>
    </location>
</feature>
<feature type="short sequence motif" description="'HIGH' region" evidence="1">
    <location>
        <begin position="102"/>
        <end position="112"/>
    </location>
</feature>
<accession>Q979Q0</accession>
<evidence type="ECO:0000255" key="1">
    <source>
        <dbReference type="HAMAP-Rule" id="MF_02076"/>
    </source>
</evidence>
<keyword id="KW-0030">Aminoacyl-tRNA synthetase</keyword>
<keyword id="KW-0067">ATP-binding</keyword>
<keyword id="KW-0963">Cytoplasm</keyword>
<keyword id="KW-0436">Ligase</keyword>
<keyword id="KW-0547">Nucleotide-binding</keyword>
<keyword id="KW-0648">Protein biosynthesis</keyword>
<sequence>MYEEEIKKIALLNAYQHNGKAELKSVIGKVMAEIADLRKNPKLVSELAKAAVDSVNSMSKDDIVNIVEKQFPEALKKDKKPEEHRLPDLQGVNGHVVMRLAPSPSGPLHIGHTRMAILNDEYVKRYGGDLILRIEDTNPTNIDPEAYAMIPEDLEWLGVNVTKTVIQSERFDLYYSVAKKLIENGHLYICTCDREEFKRKKLASIPCKDRDNPPETNLYLFEKMLDGEIKAGAAVAVMKTDLNHPNPSVRDWIAFRIIDAKHPRTGDKYRVFPMMSFSVAVDDHYLGLTHVLRGKDQLTNTEKQRYVFEYNGWNKPYYYHYGMIRFPGTRLKTSLMKKGIQAGQYDGWSDVRLGTVRAMARRGYQPETFRRYWINSGLREIDAVFSWEIFNSLNREFVDPKAYRFSFTKDPVEIKMEGSNGLTARLPYHPSHPEYGVRKYEIGDTVYISKGDADKIADGERFRLKDLCYVVRKGDRFLFDGTEMKEKTKIINWCPPNSREFQVLKPDGSIDKGLIEPASKGYRGISQLERYGYVNFYDSDEKAYFTHD</sequence>
<dbReference type="EC" id="6.1.1.17" evidence="1"/>
<dbReference type="EMBL" id="BA000011">
    <property type="protein sequence ID" value="BAB60252.1"/>
    <property type="molecule type" value="Genomic_DNA"/>
</dbReference>
<dbReference type="RefSeq" id="WP_010917344.1">
    <property type="nucleotide sequence ID" value="NC_002689.2"/>
</dbReference>
<dbReference type="SMR" id="Q979Q0"/>
<dbReference type="STRING" id="273116.gene:9381909"/>
<dbReference type="PaxDb" id="273116-14325348"/>
<dbReference type="GeneID" id="1441226"/>
<dbReference type="KEGG" id="tvo:TVG1143889"/>
<dbReference type="eggNOG" id="arCOG04302">
    <property type="taxonomic scope" value="Archaea"/>
</dbReference>
<dbReference type="HOGENOM" id="CLU_001882_1_3_2"/>
<dbReference type="OrthoDB" id="10470at2157"/>
<dbReference type="PhylomeDB" id="Q979Q0"/>
<dbReference type="Proteomes" id="UP000001017">
    <property type="component" value="Chromosome"/>
</dbReference>
<dbReference type="GO" id="GO:0005829">
    <property type="term" value="C:cytosol"/>
    <property type="evidence" value="ECO:0007669"/>
    <property type="project" value="TreeGrafter"/>
</dbReference>
<dbReference type="GO" id="GO:0032991">
    <property type="term" value="C:protein-containing complex"/>
    <property type="evidence" value="ECO:0007669"/>
    <property type="project" value="UniProtKB-ARBA"/>
</dbReference>
<dbReference type="GO" id="GO:0005524">
    <property type="term" value="F:ATP binding"/>
    <property type="evidence" value="ECO:0007669"/>
    <property type="project" value="UniProtKB-UniRule"/>
</dbReference>
<dbReference type="GO" id="GO:0004818">
    <property type="term" value="F:glutamate-tRNA ligase activity"/>
    <property type="evidence" value="ECO:0007669"/>
    <property type="project" value="UniProtKB-UniRule"/>
</dbReference>
<dbReference type="GO" id="GO:0043604">
    <property type="term" value="P:amide biosynthetic process"/>
    <property type="evidence" value="ECO:0007669"/>
    <property type="project" value="TreeGrafter"/>
</dbReference>
<dbReference type="GO" id="GO:0006424">
    <property type="term" value="P:glutamyl-tRNA aminoacylation"/>
    <property type="evidence" value="ECO:0007669"/>
    <property type="project" value="UniProtKB-UniRule"/>
</dbReference>
<dbReference type="Gene3D" id="2.40.240.100">
    <property type="match status" value="1"/>
</dbReference>
<dbReference type="Gene3D" id="3.40.50.620">
    <property type="entry name" value="HUPs"/>
    <property type="match status" value="1"/>
</dbReference>
<dbReference type="Gene3D" id="2.40.240.10">
    <property type="entry name" value="Ribosomal Protein L25, Chain P"/>
    <property type="match status" value="1"/>
</dbReference>
<dbReference type="HAMAP" id="MF_02076">
    <property type="entry name" value="Glu_tRNA_synth_type2"/>
    <property type="match status" value="1"/>
</dbReference>
<dbReference type="InterPro" id="IPR001412">
    <property type="entry name" value="aa-tRNA-synth_I_CS"/>
</dbReference>
<dbReference type="InterPro" id="IPR050132">
    <property type="entry name" value="Gln/Glu-tRNA_Ligase"/>
</dbReference>
<dbReference type="InterPro" id="IPR004526">
    <property type="entry name" value="Glu-tRNA-synth_arc/euk"/>
</dbReference>
<dbReference type="InterPro" id="IPR000924">
    <property type="entry name" value="Glu/Gln-tRNA-synth"/>
</dbReference>
<dbReference type="InterPro" id="IPR020058">
    <property type="entry name" value="Glu/Gln-tRNA-synth_Ib_cat-dom"/>
</dbReference>
<dbReference type="InterPro" id="IPR020059">
    <property type="entry name" value="Glu/Gln-tRNA-synth_Ib_codon-bd"/>
</dbReference>
<dbReference type="InterPro" id="IPR020056">
    <property type="entry name" value="Rbsml_bL25/Gln-tRNA_synth_N"/>
</dbReference>
<dbReference type="InterPro" id="IPR011035">
    <property type="entry name" value="Ribosomal_bL25/Gln-tRNA_synth"/>
</dbReference>
<dbReference type="InterPro" id="IPR014729">
    <property type="entry name" value="Rossmann-like_a/b/a_fold"/>
</dbReference>
<dbReference type="NCBIfam" id="TIGR00463">
    <property type="entry name" value="gltX_arch"/>
    <property type="match status" value="1"/>
</dbReference>
<dbReference type="NCBIfam" id="NF003169">
    <property type="entry name" value="PRK04156.1"/>
    <property type="match status" value="1"/>
</dbReference>
<dbReference type="PANTHER" id="PTHR43097:SF5">
    <property type="entry name" value="GLUTAMATE--TRNA LIGASE"/>
    <property type="match status" value="1"/>
</dbReference>
<dbReference type="PANTHER" id="PTHR43097">
    <property type="entry name" value="GLUTAMINE-TRNA LIGASE"/>
    <property type="match status" value="1"/>
</dbReference>
<dbReference type="Pfam" id="PF00749">
    <property type="entry name" value="tRNA-synt_1c"/>
    <property type="match status" value="1"/>
</dbReference>
<dbReference type="Pfam" id="PF03950">
    <property type="entry name" value="tRNA-synt_1c_C"/>
    <property type="match status" value="1"/>
</dbReference>
<dbReference type="PRINTS" id="PR00987">
    <property type="entry name" value="TRNASYNTHGLU"/>
</dbReference>
<dbReference type="SUPFAM" id="SSF52374">
    <property type="entry name" value="Nucleotidylyl transferase"/>
    <property type="match status" value="1"/>
</dbReference>
<dbReference type="SUPFAM" id="SSF50715">
    <property type="entry name" value="Ribosomal protein L25-like"/>
    <property type="match status" value="1"/>
</dbReference>
<dbReference type="PROSITE" id="PS00178">
    <property type="entry name" value="AA_TRNA_LIGASE_I"/>
    <property type="match status" value="1"/>
</dbReference>
<protein>
    <recommendedName>
        <fullName evidence="1">Glutamate--tRNA ligase</fullName>
        <ecNumber evidence="1">6.1.1.17</ecNumber>
    </recommendedName>
    <alternativeName>
        <fullName evidence="1">Glutamyl-tRNA synthetase</fullName>
        <shortName evidence="1">GluRS</shortName>
    </alternativeName>
</protein>
<reference key="1">
    <citation type="journal article" date="2000" name="Proc. Natl. Acad. Sci. U.S.A.">
        <title>Archaeal adaptation to higher temperatures revealed by genomic sequence of Thermoplasma volcanium.</title>
        <authorList>
            <person name="Kawashima T."/>
            <person name="Amano N."/>
            <person name="Koike H."/>
            <person name="Makino S."/>
            <person name="Higuchi S."/>
            <person name="Kawashima-Ohya Y."/>
            <person name="Watanabe K."/>
            <person name="Yamazaki M."/>
            <person name="Kanehori K."/>
            <person name="Kawamoto T."/>
            <person name="Nunoshiba T."/>
            <person name="Yamamoto Y."/>
            <person name="Aramaki H."/>
            <person name="Makino K."/>
            <person name="Suzuki M."/>
        </authorList>
    </citation>
    <scope>NUCLEOTIDE SEQUENCE [LARGE SCALE GENOMIC DNA]</scope>
    <source>
        <strain>ATCC 51530 / DSM 4299 / JCM 9571 / NBRC 15438 / GSS1</strain>
    </source>
</reference>
<organism>
    <name type="scientific">Thermoplasma volcanium (strain ATCC 51530 / DSM 4299 / JCM 9571 / NBRC 15438 / GSS1)</name>
    <dbReference type="NCBI Taxonomy" id="273116"/>
    <lineage>
        <taxon>Archaea</taxon>
        <taxon>Methanobacteriati</taxon>
        <taxon>Thermoplasmatota</taxon>
        <taxon>Thermoplasmata</taxon>
        <taxon>Thermoplasmatales</taxon>
        <taxon>Thermoplasmataceae</taxon>
        <taxon>Thermoplasma</taxon>
    </lineage>
</organism>